<comment type="function">
    <text evidence="1">Catalyzes the formation of 5-methyl-uridine at position 54 (m5U54) in tRNA.</text>
</comment>
<comment type="catalytic activity">
    <reaction>
        <text>uridine(54) in tRNA + S-adenosyl-L-methionine = 5-methyluridine(54) in tRNA + S-adenosyl-L-homocysteine + H(+)</text>
        <dbReference type="Rhea" id="RHEA:42712"/>
        <dbReference type="Rhea" id="RHEA-COMP:10167"/>
        <dbReference type="Rhea" id="RHEA-COMP:10193"/>
        <dbReference type="ChEBI" id="CHEBI:15378"/>
        <dbReference type="ChEBI" id="CHEBI:57856"/>
        <dbReference type="ChEBI" id="CHEBI:59789"/>
        <dbReference type="ChEBI" id="CHEBI:65315"/>
        <dbReference type="ChEBI" id="CHEBI:74447"/>
        <dbReference type="EC" id="2.1.1.35"/>
    </reaction>
</comment>
<comment type="similarity">
    <text evidence="2">Belongs to the class I-like SAM-binding methyltransferase superfamily. RNA M5U methyltransferase family.</text>
</comment>
<keyword id="KW-0004">4Fe-4S</keyword>
<keyword id="KW-0408">Iron</keyword>
<keyword id="KW-0411">Iron-sulfur</keyword>
<keyword id="KW-0479">Metal-binding</keyword>
<keyword id="KW-0489">Methyltransferase</keyword>
<keyword id="KW-0949">S-adenosyl-L-methionine</keyword>
<keyword id="KW-0808">Transferase</keyword>
<keyword id="KW-0819">tRNA processing</keyword>
<name>ATRMA_PYRHO</name>
<accession>O58864</accession>
<organism>
    <name type="scientific">Pyrococcus horikoshii (strain ATCC 700860 / DSM 12428 / JCM 9974 / NBRC 100139 / OT-3)</name>
    <dbReference type="NCBI Taxonomy" id="70601"/>
    <lineage>
        <taxon>Archaea</taxon>
        <taxon>Methanobacteriati</taxon>
        <taxon>Methanobacteriota</taxon>
        <taxon>Thermococci</taxon>
        <taxon>Thermococcales</taxon>
        <taxon>Thermococcaceae</taxon>
        <taxon>Pyrococcus</taxon>
    </lineage>
</organism>
<feature type="chain" id="PRO_0000162057" description="tRNA (uracil(54)-C(5))-methyltransferase">
    <location>
        <begin position="1"/>
        <end position="407"/>
    </location>
</feature>
<feature type="active site" description="Nucleophile" evidence="2">
    <location>
        <position position="368"/>
    </location>
</feature>
<feature type="active site" description="Proton acceptor" evidence="3">
    <location>
        <position position="400"/>
    </location>
</feature>
<feature type="binding site" evidence="1">
    <location>
        <position position="61"/>
    </location>
    <ligand>
        <name>[4Fe-4S] cluster</name>
        <dbReference type="ChEBI" id="CHEBI:49883"/>
    </ligand>
</feature>
<feature type="binding site" evidence="1">
    <location>
        <position position="67"/>
    </location>
    <ligand>
        <name>[4Fe-4S] cluster</name>
        <dbReference type="ChEBI" id="CHEBI:49883"/>
    </ligand>
</feature>
<feature type="binding site" evidence="1">
    <location>
        <position position="70"/>
    </location>
    <ligand>
        <name>[4Fe-4S] cluster</name>
        <dbReference type="ChEBI" id="CHEBI:49883"/>
    </ligand>
</feature>
<feature type="binding site" evidence="1">
    <location>
        <position position="137"/>
    </location>
    <ligand>
        <name>[4Fe-4S] cluster</name>
        <dbReference type="ChEBI" id="CHEBI:49883"/>
    </ligand>
</feature>
<feature type="binding site" evidence="2">
    <location>
        <position position="253"/>
    </location>
    <ligand>
        <name>S-adenosyl-L-methionine</name>
        <dbReference type="ChEBI" id="CHEBI:59789"/>
    </ligand>
</feature>
<feature type="binding site" evidence="2">
    <location>
        <position position="279"/>
    </location>
    <ligand>
        <name>S-adenosyl-L-methionine</name>
        <dbReference type="ChEBI" id="CHEBI:59789"/>
    </ligand>
</feature>
<feature type="binding site" evidence="2">
    <location>
        <position position="284"/>
    </location>
    <ligand>
        <name>S-adenosyl-L-methionine</name>
        <dbReference type="ChEBI" id="CHEBI:59789"/>
    </ligand>
</feature>
<feature type="binding site" evidence="1">
    <location>
        <begin position="300"/>
        <end position="301"/>
    </location>
    <ligand>
        <name>S-adenosyl-L-methionine</name>
        <dbReference type="ChEBI" id="CHEBI:59789"/>
    </ligand>
</feature>
<feature type="binding site" evidence="2">
    <location>
        <position position="327"/>
    </location>
    <ligand>
        <name>S-adenosyl-L-methionine</name>
        <dbReference type="ChEBI" id="CHEBI:59789"/>
    </ligand>
</feature>
<feature type="binding site" evidence="2">
    <location>
        <position position="341"/>
    </location>
    <ligand>
        <name>S-adenosyl-L-methionine</name>
        <dbReference type="ChEBI" id="CHEBI:59789"/>
    </ligand>
</feature>
<reference key="1">
    <citation type="journal article" date="1998" name="DNA Res.">
        <title>Complete sequence and gene organization of the genome of a hyper-thermophilic archaebacterium, Pyrococcus horikoshii OT3.</title>
        <authorList>
            <person name="Kawarabayasi Y."/>
            <person name="Sawada M."/>
            <person name="Horikawa H."/>
            <person name="Haikawa Y."/>
            <person name="Hino Y."/>
            <person name="Yamamoto S."/>
            <person name="Sekine M."/>
            <person name="Baba S."/>
            <person name="Kosugi H."/>
            <person name="Hosoyama A."/>
            <person name="Nagai Y."/>
            <person name="Sakai M."/>
            <person name="Ogura K."/>
            <person name="Otsuka R."/>
            <person name="Nakazawa H."/>
            <person name="Takamiya M."/>
            <person name="Ohfuku Y."/>
            <person name="Funahashi T."/>
            <person name="Tanaka T."/>
            <person name="Kudoh Y."/>
            <person name="Yamazaki J."/>
            <person name="Kushida N."/>
            <person name="Oguchi A."/>
            <person name="Aoki K."/>
            <person name="Yoshizawa T."/>
            <person name="Nakamura Y."/>
            <person name="Robb F.T."/>
            <person name="Horikoshi K."/>
            <person name="Masuchi Y."/>
            <person name="Shizuya H."/>
            <person name="Kikuchi H."/>
        </authorList>
    </citation>
    <scope>NUCLEOTIDE SEQUENCE [LARGE SCALE GENOMIC DNA]</scope>
    <source>
        <strain>ATCC 700860 / DSM 12428 / JCM 9974 / NBRC 100139 / OT-3</strain>
    </source>
</reference>
<evidence type="ECO:0000250" key="1"/>
<evidence type="ECO:0000255" key="2">
    <source>
        <dbReference type="PROSITE-ProRule" id="PRU01024"/>
    </source>
</evidence>
<evidence type="ECO:0000255" key="3">
    <source>
        <dbReference type="PROSITE-ProRule" id="PRU10015"/>
    </source>
</evidence>
<sequence>MRGVVKELNDDGFGVLGNVLVPFSAPGDEVEILKIEKVKKAKIASKWKLIKSSPLRVGARCKVFGRCGGCSLQHLSYDYQLEFKGERIRRLLGVDVEVIPSPRIFGHRNRIDLAVTVEGIGFRERGKWWKIVDIQECPVFGKTSRKAIERLREFIEEERISVWNVKKDEGFLRYMVLREGKFTGEVMVNLVTKEGKLPDPSKYFDFATSIYWSVNRTKSDVSYGEVESVWGREFITEKLDDVIYLIHPNSFFQTNSYQAVNLVKKVSELVEGERVLDMYSGVGTFGIYLAKRGFKVVGFDSNEFAIEMARKNAKINKVDAVFDVATDREVEVNGFDTVIVDPPRVGLHPKLIKKLNREKPEVIVYVSCNPKTFARDIEKLEYKIDEIVALDMFPHTPHLELVAKLIV</sequence>
<gene>
    <name type="ordered locus">PH1137</name>
</gene>
<dbReference type="EC" id="2.1.1.35"/>
<dbReference type="EMBL" id="BA000001">
    <property type="protein sequence ID" value="BAA30237.1"/>
    <property type="molecule type" value="Genomic_DNA"/>
</dbReference>
<dbReference type="PIR" id="C71055">
    <property type="entry name" value="C71055"/>
</dbReference>
<dbReference type="RefSeq" id="WP_010885221.1">
    <property type="nucleotide sequence ID" value="NC_000961.1"/>
</dbReference>
<dbReference type="SMR" id="O58864"/>
<dbReference type="STRING" id="70601.gene:9378097"/>
<dbReference type="EnsemblBacteria" id="BAA30237">
    <property type="protein sequence ID" value="BAA30237"/>
    <property type="gene ID" value="BAA30237"/>
</dbReference>
<dbReference type="GeneID" id="1443456"/>
<dbReference type="KEGG" id="pho:PH1137"/>
<dbReference type="eggNOG" id="arCOG00122">
    <property type="taxonomic scope" value="Archaea"/>
</dbReference>
<dbReference type="OrthoDB" id="85343at2157"/>
<dbReference type="Proteomes" id="UP000000752">
    <property type="component" value="Chromosome"/>
</dbReference>
<dbReference type="GO" id="GO:0051539">
    <property type="term" value="F:4 iron, 4 sulfur cluster binding"/>
    <property type="evidence" value="ECO:0007669"/>
    <property type="project" value="UniProtKB-KW"/>
</dbReference>
<dbReference type="GO" id="GO:0046872">
    <property type="term" value="F:metal ion binding"/>
    <property type="evidence" value="ECO:0007669"/>
    <property type="project" value="UniProtKB-KW"/>
</dbReference>
<dbReference type="GO" id="GO:0030697">
    <property type="term" value="F:tRNA (uracil(54)-C5)-methyltransferase activity, S-adenosyl methionine-dependent"/>
    <property type="evidence" value="ECO:0000250"/>
    <property type="project" value="UniProtKB"/>
</dbReference>
<dbReference type="GO" id="GO:0030488">
    <property type="term" value="P:tRNA methylation"/>
    <property type="evidence" value="ECO:0000250"/>
    <property type="project" value="UniProtKB"/>
</dbReference>
<dbReference type="CDD" id="cd02440">
    <property type="entry name" value="AdoMet_MTases"/>
    <property type="match status" value="1"/>
</dbReference>
<dbReference type="FunFam" id="3.40.50.150:FF:000009">
    <property type="entry name" value="23S rRNA (Uracil(1939)-C(5))-methyltransferase RlmD"/>
    <property type="match status" value="1"/>
</dbReference>
<dbReference type="FunFam" id="2.40.50.1070:FF:000008">
    <property type="entry name" value="23S rRNA (uracil(747)-C(5))-methyltransferase"/>
    <property type="match status" value="1"/>
</dbReference>
<dbReference type="FunFam" id="2.40.50.140:FF:000439">
    <property type="entry name" value="23S rRNA (uracil(747)-C(5))-methyltransferase"/>
    <property type="match status" value="1"/>
</dbReference>
<dbReference type="Gene3D" id="2.40.50.1070">
    <property type="match status" value="1"/>
</dbReference>
<dbReference type="Gene3D" id="2.40.50.140">
    <property type="entry name" value="Nucleic acid-binding proteins"/>
    <property type="match status" value="1"/>
</dbReference>
<dbReference type="Gene3D" id="3.40.50.150">
    <property type="entry name" value="Vaccinia Virus protein VP39"/>
    <property type="match status" value="1"/>
</dbReference>
<dbReference type="InterPro" id="IPR030390">
    <property type="entry name" value="MeTrfase_TrmA_AS"/>
</dbReference>
<dbReference type="InterPro" id="IPR030391">
    <property type="entry name" value="MeTrfase_TrmA_CS"/>
</dbReference>
<dbReference type="InterPro" id="IPR012340">
    <property type="entry name" value="NA-bd_OB-fold"/>
</dbReference>
<dbReference type="InterPro" id="IPR048845">
    <property type="entry name" value="RUMT_ARLMC_TRAM_dom"/>
</dbReference>
<dbReference type="InterPro" id="IPR029063">
    <property type="entry name" value="SAM-dependent_MTases_sf"/>
</dbReference>
<dbReference type="InterPro" id="IPR010280">
    <property type="entry name" value="U5_MeTrfase_fam"/>
</dbReference>
<dbReference type="NCBIfam" id="TIGR00479">
    <property type="entry name" value="rumA"/>
    <property type="match status" value="1"/>
</dbReference>
<dbReference type="PANTHER" id="PTHR11061">
    <property type="entry name" value="RNA M5U METHYLTRANSFERASE"/>
    <property type="match status" value="1"/>
</dbReference>
<dbReference type="PANTHER" id="PTHR11061:SF30">
    <property type="entry name" value="TRNA (URACIL(54)-C(5))-METHYLTRANSFERASE"/>
    <property type="match status" value="1"/>
</dbReference>
<dbReference type="Pfam" id="PF21579">
    <property type="entry name" value="PabTrmU54_TRAM_dom"/>
    <property type="match status" value="1"/>
</dbReference>
<dbReference type="Pfam" id="PF05958">
    <property type="entry name" value="tRNA_U5-meth_tr"/>
    <property type="match status" value="2"/>
</dbReference>
<dbReference type="SUPFAM" id="SSF53335">
    <property type="entry name" value="S-adenosyl-L-methionine-dependent methyltransferases"/>
    <property type="match status" value="1"/>
</dbReference>
<dbReference type="PROSITE" id="PS51687">
    <property type="entry name" value="SAM_MT_RNA_M5U"/>
    <property type="match status" value="1"/>
</dbReference>
<dbReference type="PROSITE" id="PS01230">
    <property type="entry name" value="TRMA_1"/>
    <property type="match status" value="1"/>
</dbReference>
<dbReference type="PROSITE" id="PS01231">
    <property type="entry name" value="TRMA_2"/>
    <property type="match status" value="1"/>
</dbReference>
<protein>
    <recommendedName>
        <fullName>tRNA (uracil(54)-C(5))-methyltransferase</fullName>
        <ecNumber>2.1.1.35</ecNumber>
    </recommendedName>
    <alternativeName>
        <fullName>tRNA(m5U54)-methyltransferase</fullName>
        <shortName>RUMT</shortName>
    </alternativeName>
</protein>
<proteinExistence type="inferred from homology"/>